<keyword id="KW-0963">Cytoplasm</keyword>
<keyword id="KW-0489">Methyltransferase</keyword>
<keyword id="KW-1185">Reference proteome</keyword>
<keyword id="KW-0698">rRNA processing</keyword>
<keyword id="KW-0949">S-adenosyl-L-methionine</keyword>
<keyword id="KW-0808">Transferase</keyword>
<accession>A5U9P7</accession>
<name>RSMG_MYCTA</name>
<proteinExistence type="inferred from homology"/>
<reference key="1">
    <citation type="journal article" date="2008" name="PLoS ONE">
        <title>Genetic basis of virulence attenuation revealed by comparative genomic analysis of Mycobacterium tuberculosis strain H37Ra versus H37Rv.</title>
        <authorList>
            <person name="Zheng H."/>
            <person name="Lu L."/>
            <person name="Wang B."/>
            <person name="Pu S."/>
            <person name="Zhang X."/>
            <person name="Zhu G."/>
            <person name="Shi W."/>
            <person name="Zhang L."/>
            <person name="Wang H."/>
            <person name="Wang S."/>
            <person name="Zhao G."/>
            <person name="Zhang Y."/>
        </authorList>
    </citation>
    <scope>NUCLEOTIDE SEQUENCE [LARGE SCALE GENOMIC DNA]</scope>
    <source>
        <strain>ATCC 25177 / H37Ra</strain>
    </source>
</reference>
<sequence>MSPIEPAASAIFGPRLGLARRYAEALAGPGVERGLVGPREVGRLWDRHLLNCAVIGELLERGDRVVDIGSGAGLPGVPLAIARPDLQVVLLEPLLRRTEFLREMVTDLGVAVEIVRGRAEESWVQDQLGGSDAAVSRAVAALDKLTKWSMPLIRPNGRMLAIKGERAHDEVREHRRVMIASGAVDVRVVTCGANYLRPPATVVFARRGKQIARGSARMASGGTA</sequence>
<gene>
    <name evidence="1" type="primary">rsmG</name>
    <name type="ordered locus">MRA_3958</name>
</gene>
<feature type="chain" id="PRO_0000335380" description="Ribosomal RNA small subunit methyltransferase G">
    <location>
        <begin position="1"/>
        <end position="224"/>
    </location>
</feature>
<feature type="binding site" evidence="1">
    <location>
        <position position="69"/>
    </location>
    <ligand>
        <name>S-adenosyl-L-methionine</name>
        <dbReference type="ChEBI" id="CHEBI:59789"/>
    </ligand>
</feature>
<feature type="binding site" evidence="1">
    <location>
        <position position="74"/>
    </location>
    <ligand>
        <name>S-adenosyl-L-methionine</name>
        <dbReference type="ChEBI" id="CHEBI:59789"/>
    </ligand>
</feature>
<feature type="binding site" evidence="1">
    <location>
        <begin position="119"/>
        <end position="120"/>
    </location>
    <ligand>
        <name>S-adenosyl-L-methionine</name>
        <dbReference type="ChEBI" id="CHEBI:59789"/>
    </ligand>
</feature>
<feature type="binding site" evidence="1">
    <location>
        <position position="137"/>
    </location>
    <ligand>
        <name>S-adenosyl-L-methionine</name>
        <dbReference type="ChEBI" id="CHEBI:59789"/>
    </ligand>
</feature>
<evidence type="ECO:0000255" key="1">
    <source>
        <dbReference type="HAMAP-Rule" id="MF_00074"/>
    </source>
</evidence>
<protein>
    <recommendedName>
        <fullName evidence="1">Ribosomal RNA small subunit methyltransferase G</fullName>
        <ecNumber evidence="1">2.1.1.-</ecNumber>
    </recommendedName>
    <alternativeName>
        <fullName evidence="1">16S rRNA 7-methylguanosine methyltransferase</fullName>
        <shortName evidence="1">16S rRNA m7G methyltransferase</shortName>
    </alternativeName>
</protein>
<dbReference type="EC" id="2.1.1.-" evidence="1"/>
<dbReference type="EMBL" id="CP000611">
    <property type="protein sequence ID" value="ABQ75747.1"/>
    <property type="molecule type" value="Genomic_DNA"/>
</dbReference>
<dbReference type="RefSeq" id="WP_003899763.1">
    <property type="nucleotide sequence ID" value="NZ_CP016972.1"/>
</dbReference>
<dbReference type="SMR" id="A5U9P7"/>
<dbReference type="GeneID" id="45427919"/>
<dbReference type="KEGG" id="mra:MRA_3958"/>
<dbReference type="eggNOG" id="COG0357">
    <property type="taxonomic scope" value="Bacteria"/>
</dbReference>
<dbReference type="HOGENOM" id="CLU_065341_5_0_11"/>
<dbReference type="Proteomes" id="UP000001988">
    <property type="component" value="Chromosome"/>
</dbReference>
<dbReference type="GO" id="GO:0005829">
    <property type="term" value="C:cytosol"/>
    <property type="evidence" value="ECO:0007669"/>
    <property type="project" value="TreeGrafter"/>
</dbReference>
<dbReference type="GO" id="GO:0070043">
    <property type="term" value="F:rRNA (guanine-N7-)-methyltransferase activity"/>
    <property type="evidence" value="ECO:0007669"/>
    <property type="project" value="UniProtKB-UniRule"/>
</dbReference>
<dbReference type="FunFam" id="3.40.50.150:FF:000117">
    <property type="entry name" value="Ribosomal RNA small subunit methyltransferase G"/>
    <property type="match status" value="1"/>
</dbReference>
<dbReference type="Gene3D" id="3.40.50.150">
    <property type="entry name" value="Vaccinia Virus protein VP39"/>
    <property type="match status" value="1"/>
</dbReference>
<dbReference type="HAMAP" id="MF_00074">
    <property type="entry name" value="16SrRNA_methyltr_G"/>
    <property type="match status" value="1"/>
</dbReference>
<dbReference type="InterPro" id="IPR003682">
    <property type="entry name" value="rRNA_ssu_MeTfrase_G"/>
</dbReference>
<dbReference type="InterPro" id="IPR029063">
    <property type="entry name" value="SAM-dependent_MTases_sf"/>
</dbReference>
<dbReference type="NCBIfam" id="TIGR00138">
    <property type="entry name" value="rsmG_gidB"/>
    <property type="match status" value="1"/>
</dbReference>
<dbReference type="PANTHER" id="PTHR31760">
    <property type="entry name" value="S-ADENOSYL-L-METHIONINE-DEPENDENT METHYLTRANSFERASES SUPERFAMILY PROTEIN"/>
    <property type="match status" value="1"/>
</dbReference>
<dbReference type="PANTHER" id="PTHR31760:SF0">
    <property type="entry name" value="S-ADENOSYL-L-METHIONINE-DEPENDENT METHYLTRANSFERASES SUPERFAMILY PROTEIN"/>
    <property type="match status" value="1"/>
</dbReference>
<dbReference type="Pfam" id="PF02527">
    <property type="entry name" value="GidB"/>
    <property type="match status" value="1"/>
</dbReference>
<dbReference type="PIRSF" id="PIRSF003078">
    <property type="entry name" value="GidB"/>
    <property type="match status" value="1"/>
</dbReference>
<dbReference type="SUPFAM" id="SSF53335">
    <property type="entry name" value="S-adenosyl-L-methionine-dependent methyltransferases"/>
    <property type="match status" value="1"/>
</dbReference>
<comment type="function">
    <text evidence="1">Specifically methylates the N7 position of guanine in position 518 of 16S rRNA.</text>
</comment>
<comment type="subcellular location">
    <subcellularLocation>
        <location evidence="1">Cytoplasm</location>
    </subcellularLocation>
</comment>
<comment type="similarity">
    <text evidence="1">Belongs to the methyltransferase superfamily. RNA methyltransferase RsmG family.</text>
</comment>
<organism>
    <name type="scientific">Mycobacterium tuberculosis (strain ATCC 25177 / H37Ra)</name>
    <dbReference type="NCBI Taxonomy" id="419947"/>
    <lineage>
        <taxon>Bacteria</taxon>
        <taxon>Bacillati</taxon>
        <taxon>Actinomycetota</taxon>
        <taxon>Actinomycetes</taxon>
        <taxon>Mycobacteriales</taxon>
        <taxon>Mycobacteriaceae</taxon>
        <taxon>Mycobacterium</taxon>
        <taxon>Mycobacterium tuberculosis complex</taxon>
    </lineage>
</organism>